<gene>
    <name type="ordered locus">BUsg_175</name>
</gene>
<proteinExistence type="predicted"/>
<name>Y175_BUCAP</name>
<evidence type="ECO:0000256" key="1">
    <source>
        <dbReference type="SAM" id="MobiDB-lite"/>
    </source>
</evidence>
<feature type="chain" id="PRO_0000216250" description="Uncharacterized protein BUsg_175">
    <location>
        <begin position="1"/>
        <end position="234"/>
    </location>
</feature>
<feature type="region of interest" description="Disordered" evidence="1">
    <location>
        <begin position="199"/>
        <end position="234"/>
    </location>
</feature>
<protein>
    <recommendedName>
        <fullName>Uncharacterized protein BUsg_175</fullName>
    </recommendedName>
    <alternativeName>
        <fullName>yba2</fullName>
    </alternativeName>
</protein>
<dbReference type="EMBL" id="AE013218">
    <property type="protein sequence ID" value="AAM67741.1"/>
    <property type="molecule type" value="Genomic_DNA"/>
</dbReference>
<dbReference type="RefSeq" id="WP_011053708.1">
    <property type="nucleotide sequence ID" value="NC_004061.1"/>
</dbReference>
<dbReference type="SMR" id="Q8K9W1"/>
<dbReference type="STRING" id="198804.BUsg_175"/>
<dbReference type="GeneID" id="93003643"/>
<dbReference type="KEGG" id="bas:BUsg_175"/>
<dbReference type="eggNOG" id="COG3416">
    <property type="taxonomic scope" value="Bacteria"/>
</dbReference>
<dbReference type="HOGENOM" id="CLU_082335_1_0_6"/>
<dbReference type="Proteomes" id="UP000000416">
    <property type="component" value="Chromosome"/>
</dbReference>
<dbReference type="InterPro" id="IPR018648">
    <property type="entry name" value="DUF2076"/>
</dbReference>
<dbReference type="Pfam" id="PF09849">
    <property type="entry name" value="DUF2076"/>
    <property type="match status" value="1"/>
</dbReference>
<organism>
    <name type="scientific">Buchnera aphidicola subsp. Schizaphis graminum (strain Sg)</name>
    <dbReference type="NCBI Taxonomy" id="198804"/>
    <lineage>
        <taxon>Bacteria</taxon>
        <taxon>Pseudomonadati</taxon>
        <taxon>Pseudomonadota</taxon>
        <taxon>Gammaproteobacteria</taxon>
        <taxon>Enterobacterales</taxon>
        <taxon>Erwiniaceae</taxon>
        <taxon>Buchnera</taxon>
    </lineage>
</organism>
<sequence>MKDEEKNLIENLFHRLKKIELNCSERDDTADVLIQNLVKKQPYSSYYMVQTILIQETAIKKMNLKIEELKNQISILNSDQVNKKPSFLSNFLKKDPGSKTISYDNTIWKKNQNNLESCNTNIPSSSAATTRNSGFLKNALQTATGVAGGMILGNMLMNLFNHTTPEEEIFDNINQSSASDIDNEYDSIQNNHSDLVNYDNQNEPLENYSDDNNFSNFDETEHVDDSEMNDDNFI</sequence>
<accession>Q8K9W1</accession>
<reference key="1">
    <citation type="journal article" date="2002" name="Science">
        <title>50 million years of genomic stasis in endosymbiotic bacteria.</title>
        <authorList>
            <person name="Tamas I."/>
            <person name="Klasson L."/>
            <person name="Canbaeck B."/>
            <person name="Naeslund A.K."/>
            <person name="Eriksson A.-S."/>
            <person name="Wernegreen J.J."/>
            <person name="Sandstroem J.P."/>
            <person name="Moran N.A."/>
            <person name="Andersson S.G.E."/>
        </authorList>
    </citation>
    <scope>NUCLEOTIDE SEQUENCE [LARGE SCALE GENOMIC DNA]</scope>
    <source>
        <strain>Sg</strain>
    </source>
</reference>